<dbReference type="EMBL" id="AF002700">
    <property type="protein sequence ID" value="AAC52036.1"/>
    <property type="molecule type" value="mRNA"/>
</dbReference>
<dbReference type="EMBL" id="U93703">
    <property type="protein sequence ID" value="AAB61922.1"/>
    <property type="molecule type" value="mRNA"/>
</dbReference>
<dbReference type="EMBL" id="U97145">
    <property type="protein sequence ID" value="AAC51647.1"/>
    <property type="molecule type" value="mRNA"/>
</dbReference>
<dbReference type="EMBL" id="AY326396">
    <property type="protein sequence ID" value="AAP88378.1"/>
    <property type="molecule type" value="mRNA"/>
</dbReference>
<dbReference type="EMBL" id="AY941828">
    <property type="protein sequence ID" value="AAX46325.1"/>
    <property type="molecule type" value="mRNA"/>
</dbReference>
<dbReference type="EMBL" id="AC105186">
    <property type="status" value="NOT_ANNOTATED_CDS"/>
    <property type="molecule type" value="Genomic_DNA"/>
</dbReference>
<dbReference type="EMBL" id="AC129925">
    <property type="status" value="NOT_ANNOTATED_CDS"/>
    <property type="molecule type" value="Genomic_DNA"/>
</dbReference>
<dbReference type="EMBL" id="AP008236">
    <property type="status" value="NOT_ANNOTATED_CDS"/>
    <property type="molecule type" value="Genomic_DNA"/>
</dbReference>
<dbReference type="EMBL" id="BC041688">
    <property type="protein sequence ID" value="AAH41688.1"/>
    <property type="molecule type" value="mRNA"/>
</dbReference>
<dbReference type="CCDS" id="CCDS47816.1">
    <molecule id="O00451-1"/>
</dbReference>
<dbReference type="CCDS" id="CCDS55207.1">
    <molecule id="O00451-2"/>
</dbReference>
<dbReference type="CCDS" id="CCDS55208.1">
    <molecule id="O00451-3"/>
</dbReference>
<dbReference type="RefSeq" id="NP_001158510.1">
    <molecule id="O00451-3"/>
    <property type="nucleotide sequence ID" value="NM_001165038.2"/>
</dbReference>
<dbReference type="RefSeq" id="NP_001158511.1">
    <molecule id="O00451-2"/>
    <property type="nucleotide sequence ID" value="NM_001165039.2"/>
</dbReference>
<dbReference type="RefSeq" id="NP_001486.4">
    <molecule id="O00451-1"/>
    <property type="nucleotide sequence ID" value="NM_001495.4"/>
</dbReference>
<dbReference type="RefSeq" id="XP_006716390.1">
    <molecule id="O00451-1"/>
    <property type="nucleotide sequence ID" value="XM_006716327.4"/>
</dbReference>
<dbReference type="RefSeq" id="XP_011542786.1">
    <molecule id="O00451-1"/>
    <property type="nucleotide sequence ID" value="XM_011544484.3"/>
</dbReference>
<dbReference type="RefSeq" id="XP_047277643.1">
    <molecule id="O00451-1"/>
    <property type="nucleotide sequence ID" value="XM_047421687.1"/>
</dbReference>
<dbReference type="PDB" id="5MR4">
    <property type="method" value="X-ray"/>
    <property type="resolution" value="2.40 A"/>
    <property type="chains" value="C/D=1-458"/>
</dbReference>
<dbReference type="PDB" id="5MR5">
    <property type="method" value="X-ray"/>
    <property type="resolution" value="2.00 A"/>
    <property type="chains" value="C/D=147-362"/>
</dbReference>
<dbReference type="PDB" id="6GL7">
    <property type="method" value="EM"/>
    <property type="resolution" value="6.30 A"/>
    <property type="chains" value="C/D=22-441"/>
</dbReference>
<dbReference type="PDB" id="6Q2O">
    <property type="method" value="EM"/>
    <property type="resolution" value="3.65 A"/>
    <property type="chains" value="C/D=24-362"/>
</dbReference>
<dbReference type="PDB" id="6Q2R">
    <property type="method" value="EM"/>
    <property type="resolution" value="4.30 A"/>
    <property type="chains" value="C/D/W/X=24-362"/>
</dbReference>
<dbReference type="PDBsum" id="5MR4"/>
<dbReference type="PDBsum" id="5MR5"/>
<dbReference type="PDBsum" id="6GL7"/>
<dbReference type="PDBsum" id="6Q2O"/>
<dbReference type="PDBsum" id="6Q2R"/>
<dbReference type="EMDB" id="EMD-0026"/>
<dbReference type="EMDB" id="EMD-20576"/>
<dbReference type="EMDB" id="EMD-20578"/>
<dbReference type="SMR" id="O00451"/>
<dbReference type="BioGRID" id="108943">
    <property type="interactions" value="4"/>
</dbReference>
<dbReference type="CORUM" id="O00451"/>
<dbReference type="FunCoup" id="O00451">
    <property type="interactions" value="50"/>
</dbReference>
<dbReference type="IntAct" id="O00451">
    <property type="interactions" value="2"/>
</dbReference>
<dbReference type="STRING" id="9606.ENSP00000428518"/>
<dbReference type="GlyCosmos" id="O00451">
    <property type="glycosylation" value="5 sites, 3 glycans"/>
</dbReference>
<dbReference type="GlyGen" id="O00451">
    <property type="glycosylation" value="6 sites, 2 N-linked glycans (1 site), 4 O-linked glycans (3 sites)"/>
</dbReference>
<dbReference type="iPTMnet" id="O00451"/>
<dbReference type="PhosphoSitePlus" id="O00451"/>
<dbReference type="BioMuta" id="GFRA2"/>
<dbReference type="MassIVE" id="O00451"/>
<dbReference type="PaxDb" id="9606-ENSP00000428518"/>
<dbReference type="PeptideAtlas" id="O00451"/>
<dbReference type="ProteomicsDB" id="19584"/>
<dbReference type="ProteomicsDB" id="47897">
    <molecule id="O00451-1"/>
</dbReference>
<dbReference type="ProteomicsDB" id="47898">
    <molecule id="O00451-2"/>
</dbReference>
<dbReference type="Antibodypedia" id="5212">
    <property type="antibodies" value="400 antibodies from 34 providers"/>
</dbReference>
<dbReference type="DNASU" id="2675"/>
<dbReference type="Ensembl" id="ENST00000517328.5">
    <molecule id="O00451-1"/>
    <property type="protein sequence ID" value="ENSP00000429445.1"/>
    <property type="gene ID" value="ENSG00000168546.11"/>
</dbReference>
<dbReference type="Ensembl" id="ENST00000517892.5">
    <molecule id="O00451-3"/>
    <property type="protein sequence ID" value="ENSP00000429979.1"/>
    <property type="gene ID" value="ENSG00000168546.11"/>
</dbReference>
<dbReference type="Ensembl" id="ENST00000518077.5">
    <molecule id="O00451-2"/>
    <property type="protein sequence ID" value="ENSP00000429206.1"/>
    <property type="gene ID" value="ENSG00000168546.11"/>
</dbReference>
<dbReference type="Ensembl" id="ENST00000524240.6">
    <molecule id="O00451-1"/>
    <property type="protein sequence ID" value="ENSP00000428518.1"/>
    <property type="gene ID" value="ENSG00000168546.11"/>
</dbReference>
<dbReference type="GeneID" id="2675"/>
<dbReference type="KEGG" id="hsa:2675"/>
<dbReference type="MANE-Select" id="ENST00000524240.6">
    <property type="protein sequence ID" value="ENSP00000428518.1"/>
    <property type="RefSeq nucleotide sequence ID" value="NM_001495.5"/>
    <property type="RefSeq protein sequence ID" value="NP_001486.4"/>
</dbReference>
<dbReference type="UCSC" id="uc003wzu.2">
    <molecule id="O00451-1"/>
    <property type="organism name" value="human"/>
</dbReference>
<dbReference type="AGR" id="HGNC:4244"/>
<dbReference type="CTD" id="2675"/>
<dbReference type="DisGeNET" id="2675"/>
<dbReference type="GeneCards" id="GFRA2"/>
<dbReference type="HGNC" id="HGNC:4244">
    <property type="gene designation" value="GFRA2"/>
</dbReference>
<dbReference type="HPA" id="ENSG00000168546">
    <property type="expression patterns" value="Tissue enhanced (testis, thyroid gland)"/>
</dbReference>
<dbReference type="MIM" id="601956">
    <property type="type" value="gene"/>
</dbReference>
<dbReference type="neXtProt" id="NX_O00451"/>
<dbReference type="OpenTargets" id="ENSG00000168546"/>
<dbReference type="PharmGKB" id="PA28654"/>
<dbReference type="VEuPathDB" id="HostDB:ENSG00000168546"/>
<dbReference type="eggNOG" id="ENOG502QS3P">
    <property type="taxonomic scope" value="Eukaryota"/>
</dbReference>
<dbReference type="GeneTree" id="ENSGT00940000156168"/>
<dbReference type="HOGENOM" id="CLU_040179_1_1_1"/>
<dbReference type="InParanoid" id="O00451"/>
<dbReference type="OMA" id="LCYSEAQ"/>
<dbReference type="OrthoDB" id="9435188at2759"/>
<dbReference type="PAN-GO" id="O00451">
    <property type="GO annotations" value="4 GO annotations based on evolutionary models"/>
</dbReference>
<dbReference type="PhylomeDB" id="O00451"/>
<dbReference type="TreeFam" id="TF331647"/>
<dbReference type="PathwayCommons" id="O00451"/>
<dbReference type="Reactome" id="R-HSA-419037">
    <property type="pathway name" value="NCAM1 interactions"/>
</dbReference>
<dbReference type="Reactome" id="R-HSA-5673001">
    <property type="pathway name" value="RAF/MAP kinase cascade"/>
</dbReference>
<dbReference type="Reactome" id="R-HSA-8853659">
    <property type="pathway name" value="RET signaling"/>
</dbReference>
<dbReference type="SignaLink" id="O00451"/>
<dbReference type="SIGNOR" id="O00451"/>
<dbReference type="BioGRID-ORCS" id="2675">
    <property type="hits" value="14 hits in 1146 CRISPR screens"/>
</dbReference>
<dbReference type="ChiTaRS" id="GFRA2">
    <property type="organism name" value="human"/>
</dbReference>
<dbReference type="GeneWiki" id="GFRA2_(gene)"/>
<dbReference type="GenomeRNAi" id="2675"/>
<dbReference type="Pharos" id="O00451">
    <property type="development level" value="Tbio"/>
</dbReference>
<dbReference type="PRO" id="PR:O00451"/>
<dbReference type="Proteomes" id="UP000005640">
    <property type="component" value="Chromosome 8"/>
</dbReference>
<dbReference type="RNAct" id="O00451">
    <property type="molecule type" value="protein"/>
</dbReference>
<dbReference type="Bgee" id="ENSG00000168546">
    <property type="expression patterns" value="Expressed in secondary oocyte and 128 other cell types or tissues"/>
</dbReference>
<dbReference type="ExpressionAtlas" id="O00451">
    <property type="expression patterns" value="baseline and differential"/>
</dbReference>
<dbReference type="GO" id="GO:0009897">
    <property type="term" value="C:external side of plasma membrane"/>
    <property type="evidence" value="ECO:0000318"/>
    <property type="project" value="GO_Central"/>
</dbReference>
<dbReference type="GO" id="GO:0019898">
    <property type="term" value="C:extrinsic component of membrane"/>
    <property type="evidence" value="ECO:0000304"/>
    <property type="project" value="ProtInc"/>
</dbReference>
<dbReference type="GO" id="GO:0005886">
    <property type="term" value="C:plasma membrane"/>
    <property type="evidence" value="ECO:0000314"/>
    <property type="project" value="UniProt"/>
</dbReference>
<dbReference type="GO" id="GO:0043235">
    <property type="term" value="C:receptor complex"/>
    <property type="evidence" value="ECO:0000318"/>
    <property type="project" value="GO_Central"/>
</dbReference>
<dbReference type="GO" id="GO:0016167">
    <property type="term" value="F:glial cell-derived neurotrophic factor receptor activity"/>
    <property type="evidence" value="ECO:0000314"/>
    <property type="project" value="UniProtKB"/>
</dbReference>
<dbReference type="GO" id="GO:1904399">
    <property type="term" value="F:heparan sulfate binding"/>
    <property type="evidence" value="ECO:0000314"/>
    <property type="project" value="UniProtKB"/>
</dbReference>
<dbReference type="GO" id="GO:0007169">
    <property type="term" value="P:cell surface receptor protein tyrosine kinase signaling pathway"/>
    <property type="evidence" value="ECO:0000304"/>
    <property type="project" value="ProtInc"/>
</dbReference>
<dbReference type="GO" id="GO:0035860">
    <property type="term" value="P:glial cell-derived neurotrophic factor receptor signaling pathway"/>
    <property type="evidence" value="ECO:0000314"/>
    <property type="project" value="UniProtKB"/>
</dbReference>
<dbReference type="GO" id="GO:0007399">
    <property type="term" value="P:nervous system development"/>
    <property type="evidence" value="ECO:0000318"/>
    <property type="project" value="GO_Central"/>
</dbReference>
<dbReference type="FunFam" id="1.10.220.110:FF:000001">
    <property type="entry name" value="GDNF family receptor alpha"/>
    <property type="match status" value="1"/>
</dbReference>
<dbReference type="Gene3D" id="1.10.220.110">
    <property type="entry name" value="GDNF binding domain"/>
    <property type="match status" value="1"/>
</dbReference>
<dbReference type="InterPro" id="IPR016017">
    <property type="entry name" value="GDNF/GAS1"/>
</dbReference>
<dbReference type="InterPro" id="IPR037193">
    <property type="entry name" value="GDNF_alpha"/>
</dbReference>
<dbReference type="InterPro" id="IPR003438">
    <property type="entry name" value="GDNF_rcpt"/>
</dbReference>
<dbReference type="InterPro" id="IPR003504">
    <property type="entry name" value="GDNF_rcpt_a2"/>
</dbReference>
<dbReference type="InterPro" id="IPR017372">
    <property type="entry name" value="Glial_neurotroph_fac_rcpt_a1/2"/>
</dbReference>
<dbReference type="PANTHER" id="PTHR10269:SF4">
    <property type="entry name" value="GDNF FAMILY RECEPTOR ALPHA-2"/>
    <property type="match status" value="1"/>
</dbReference>
<dbReference type="PANTHER" id="PTHR10269">
    <property type="entry name" value="GDNF RECEPTOR ALPHA"/>
    <property type="match status" value="1"/>
</dbReference>
<dbReference type="Pfam" id="PF02351">
    <property type="entry name" value="GDNF"/>
    <property type="match status" value="3"/>
</dbReference>
<dbReference type="PIRSF" id="PIRSF038071">
    <property type="entry name" value="GDNF_family_receptor_alpha"/>
    <property type="match status" value="1"/>
</dbReference>
<dbReference type="PRINTS" id="PR01318">
    <property type="entry name" value="GDNFRALPHA2"/>
</dbReference>
<dbReference type="PRINTS" id="PR01316">
    <property type="entry name" value="GDNFRECEPTOR"/>
</dbReference>
<dbReference type="SMART" id="SM00907">
    <property type="entry name" value="GDNF"/>
    <property type="match status" value="3"/>
</dbReference>
<dbReference type="SUPFAM" id="SSF110035">
    <property type="entry name" value="GDNF receptor-like"/>
    <property type="match status" value="1"/>
</dbReference>
<feature type="signal peptide" evidence="2">
    <location>
        <begin position="1"/>
        <end position="21"/>
    </location>
</feature>
<feature type="chain" id="PRO_0000010785" description="GDNF family receptor alpha-2">
    <location>
        <begin position="22"/>
        <end position="444"/>
    </location>
</feature>
<feature type="propeptide" id="PRO_0000010786" description="Removed in mature form" evidence="2">
    <location>
        <begin position="445"/>
        <end position="464"/>
    </location>
</feature>
<feature type="region of interest" description="Disordered" evidence="3">
    <location>
        <begin position="363"/>
        <end position="392"/>
    </location>
</feature>
<feature type="compositionally biased region" description="Low complexity" evidence="3">
    <location>
        <begin position="381"/>
        <end position="392"/>
    </location>
</feature>
<feature type="lipid moiety-binding region" description="GPI-anchor amidated serine" evidence="2">
    <location>
        <position position="444"/>
    </location>
</feature>
<feature type="glycosylation site" description="N-linked (GlcNAc...) asparagine" evidence="2">
    <location>
        <position position="52"/>
    </location>
</feature>
<feature type="glycosylation site" description="N-linked (GlcNAc...) asparagine" evidence="2">
    <location>
        <position position="357"/>
    </location>
</feature>
<feature type="glycosylation site" description="N-linked (GlcNAc...) asparagine" evidence="2">
    <location>
        <position position="413"/>
    </location>
</feature>
<feature type="disulfide bond" evidence="6 7 14 16 17">
    <location>
        <begin position="40"/>
        <end position="93"/>
    </location>
</feature>
<feature type="disulfide bond" evidence="6 7 14 16 17">
    <location>
        <begin position="95"/>
        <end position="105"/>
    </location>
</feature>
<feature type="disulfide bond" evidence="6 7 14 15 16 17">
    <location>
        <begin position="161"/>
        <end position="222"/>
    </location>
</feature>
<feature type="disulfide bond" evidence="6 7 14 15 16 17">
    <location>
        <begin position="168"/>
        <end position="174"/>
    </location>
</feature>
<feature type="disulfide bond" evidence="6 7 14 15 16 17">
    <location>
        <begin position="185"/>
        <end position="200"/>
    </location>
</feature>
<feature type="disulfide bond" evidence="6 7 14 15 16 17">
    <location>
        <begin position="195"/>
        <end position="241"/>
    </location>
</feature>
<feature type="disulfide bond" evidence="6 7 14 15 16 17">
    <location>
        <begin position="224"/>
        <end position="229"/>
    </location>
</feature>
<feature type="disulfide bond" evidence="6 7 14 15 16 17">
    <location>
        <begin position="251"/>
        <end position="323"/>
    </location>
</feature>
<feature type="disulfide bond" evidence="6 7 14 15 16 17">
    <location>
        <begin position="258"/>
        <end position="264"/>
    </location>
</feature>
<feature type="disulfide bond" evidence="6 7 14 15 16 17">
    <location>
        <begin position="275"/>
        <end position="293"/>
    </location>
</feature>
<feature type="disulfide bond" evidence="6 7 14 15 16 17">
    <location>
        <begin position="285"/>
        <end position="347"/>
    </location>
</feature>
<feature type="splice variant" id="VSP_001661" description="In isoform 2." evidence="11 12">
    <location>
        <begin position="14"/>
        <end position="146"/>
    </location>
</feature>
<feature type="splice variant" id="VSP_046112" description="In isoform 3." evidence="12">
    <location>
        <begin position="14"/>
        <end position="118"/>
    </location>
</feature>
<feature type="sequence variant" id="VAR_059976" description="In dbSNP:rs1128397." evidence="8 9 10">
    <original>L</original>
    <variation>Q</variation>
    <location>
        <position position="462"/>
    </location>
</feature>
<feature type="sequence conflict" description="In Ref. 2; AAB61922." evidence="13" ref="2">
    <original>V</original>
    <variation>A</variation>
    <location>
        <position position="6"/>
    </location>
</feature>
<feature type="helix" evidence="18">
    <location>
        <begin position="40"/>
        <end position="48"/>
    </location>
</feature>
<feature type="helix" evidence="18">
    <location>
        <begin position="51"/>
        <end position="64"/>
    </location>
</feature>
<feature type="helix" evidence="18">
    <location>
        <begin position="76"/>
        <end position="86"/>
    </location>
</feature>
<feature type="turn" evidence="18">
    <location>
        <begin position="89"/>
        <end position="92"/>
    </location>
</feature>
<feature type="helix" evidence="18">
    <location>
        <begin position="102"/>
        <end position="111"/>
    </location>
</feature>
<feature type="helix" evidence="19">
    <location>
        <begin position="160"/>
        <end position="169"/>
    </location>
</feature>
<feature type="helix" evidence="19">
    <location>
        <begin position="172"/>
        <end position="186"/>
    </location>
</feature>
<feature type="strand" evidence="18">
    <location>
        <begin position="193"/>
        <end position="195"/>
    </location>
</feature>
<feature type="helix" evidence="19">
    <location>
        <begin position="197"/>
        <end position="210"/>
    </location>
</feature>
<feature type="helix" evidence="19">
    <location>
        <begin position="213"/>
        <end position="220"/>
    </location>
</feature>
<feature type="helix" evidence="19">
    <location>
        <begin position="227"/>
        <end position="235"/>
    </location>
</feature>
<feature type="helix" evidence="19">
    <location>
        <begin position="239"/>
        <end position="242"/>
    </location>
</feature>
<feature type="helix" evidence="19">
    <location>
        <begin position="251"/>
        <end position="260"/>
    </location>
</feature>
<feature type="helix" evidence="19">
    <location>
        <begin position="262"/>
        <end position="275"/>
    </location>
</feature>
<feature type="strand" evidence="19">
    <location>
        <begin position="279"/>
        <end position="281"/>
    </location>
</feature>
<feature type="helix" evidence="19">
    <location>
        <begin position="286"/>
        <end position="288"/>
    </location>
</feature>
<feature type="helix" evidence="19">
    <location>
        <begin position="290"/>
        <end position="298"/>
    </location>
</feature>
<feature type="turn" evidence="19">
    <location>
        <begin position="299"/>
        <end position="302"/>
    </location>
</feature>
<feature type="strand" evidence="19">
    <location>
        <begin position="307"/>
        <end position="309"/>
    </location>
</feature>
<feature type="strand" evidence="19">
    <location>
        <begin position="314"/>
        <end position="316"/>
    </location>
</feature>
<feature type="strand" evidence="19">
    <location>
        <begin position="319"/>
        <end position="322"/>
    </location>
</feature>
<feature type="helix" evidence="19">
    <location>
        <begin position="329"/>
        <end position="331"/>
    </location>
</feature>
<feature type="helix" evidence="19">
    <location>
        <begin position="332"/>
        <end position="343"/>
    </location>
</feature>
<feature type="helix" evidence="19">
    <location>
        <begin position="346"/>
        <end position="355"/>
    </location>
</feature>
<keyword id="KW-0002">3D-structure</keyword>
<keyword id="KW-0025">Alternative splicing</keyword>
<keyword id="KW-1003">Cell membrane</keyword>
<keyword id="KW-1015">Disulfide bond</keyword>
<keyword id="KW-0325">Glycoprotein</keyword>
<keyword id="KW-0336">GPI-anchor</keyword>
<keyword id="KW-0449">Lipoprotein</keyword>
<keyword id="KW-0472">Membrane</keyword>
<keyword id="KW-1267">Proteomics identification</keyword>
<keyword id="KW-0675">Receptor</keyword>
<keyword id="KW-1185">Reference proteome</keyword>
<keyword id="KW-0732">Signal</keyword>
<comment type="function">
    <text evidence="4 6 7 8">Receptor for neurturin (NRTN), a growth factor that supports the survival of sympathetic neurons (PubMed:10829012, PubMed:29414779, PubMed:31535977, PubMed:9182803). NRTN-binding leads to autophosphorylation and activation of the RET receptor (PubMed:31535977). Also able to mediate GDNF signaling through the RET tyrosine kinase receptor (PubMed:9182803).</text>
</comment>
<comment type="function">
    <molecule>Isoform 2</molecule>
    <text evidence="1">Participates in NRTN-induced 'Ser-727' phosphorylation of STAT3.</text>
</comment>
<comment type="subunit">
    <text evidence="5 7">Interacts with NRTN ligand and RET: forms a 2:2:2 ternary complex composed of NRTN ligand, GFRA2 and RET receptor (PubMed:31535977). Also forms a 4:4:4 tetrameric complex composed of 4 copies of NRTN ligand, GFRA2 and RET receptor, which prevents endocytosis of RET (PubMed:31535977). Interacts with SORL1 (PubMed:23333276).</text>
</comment>
<comment type="subcellular location">
    <subcellularLocation>
        <location evidence="1">Cell membrane</location>
        <topology evidence="1">Lipid-anchor</topology>
        <topology evidence="1">GPI-anchor</topology>
    </subcellularLocation>
</comment>
<comment type="alternative products">
    <event type="alternative splicing"/>
    <isoform>
        <id>O00451-1</id>
        <name>1</name>
        <name>Long</name>
        <sequence type="displayed"/>
    </isoform>
    <isoform>
        <id>O00451-2</id>
        <name>2</name>
        <name>Short</name>
        <sequence type="described" ref="VSP_001661"/>
    </isoform>
    <isoform>
        <id>O00451-3</id>
        <name>3</name>
        <sequence type="described" ref="VSP_046112"/>
    </isoform>
</comment>
<comment type="tissue specificity">
    <molecule>Isoform 1</molecule>
    <text evidence="9">found in both brain and placenta.</text>
</comment>
<comment type="similarity">
    <text evidence="13">Belongs to the GDNFR family.</text>
</comment>
<name>GFRA2_HUMAN</name>
<reference key="1">
    <citation type="journal article" date="1997" name="Neuron">
        <title>TrnR2, a novel receptor that mediates neurturin and GDNF signaling through Ret.</title>
        <authorList>
            <person name="Baloh R.H."/>
            <person name="Tansey M.G."/>
            <person name="Golden J.P."/>
            <person name="Creedon D.J."/>
            <person name="Heuckeroth R.O."/>
            <person name="Keck C.L."/>
            <person name="Zimonjic D.B."/>
            <person name="Popescu N.C."/>
            <person name="Johnson E.M. Jr."/>
            <person name="Milbrandt J."/>
        </authorList>
    </citation>
    <scope>NUCLEOTIDE SEQUENCE [MRNA] (ISOFORMS 1 AND 2)</scope>
    <scope>FUNCTION</scope>
    <scope>VARIANT GLN-462</scope>
</reference>
<reference key="2">
    <citation type="journal article" date="1997" name="Hum. Mol. Genet.">
        <title>Cloning, mRNA distribution and chromosomal localisation of the gene for glial cell line-derived neurotrophic factor receptor beta, a homologue to GDNFR-alpha.</title>
        <authorList>
            <person name="Suvanto P."/>
            <person name="Wartiovaara K."/>
            <person name="Lindahl M."/>
            <person name="Arumae U."/>
            <person name="Moshnyakov M."/>
            <person name="Horelli-Kuitunen N."/>
            <person name="Airaksinen M.S."/>
            <person name="Palotie A."/>
            <person name="Sariola H."/>
            <person name="Saarma M."/>
        </authorList>
    </citation>
    <scope>NUCLEOTIDE SEQUENCE [MRNA] (ISOFORM 1)</scope>
    <scope>TISSUE SPECIFICITY</scope>
    <scope>VARIANT GLN-462</scope>
    <source>
        <tissue>Fetal brain</tissue>
    </source>
</reference>
<reference key="3">
    <citation type="journal article" date="1997" name="Proc. Natl. Acad. Sci. U.S.A.">
        <title>Glial cell line-derived neurotrophic factor-dependent RET activation can be mediated by two different cell-surface accessory proteins.</title>
        <authorList>
            <person name="Sanicola M."/>
            <person name="Hession C.A."/>
            <person name="Worley D.S."/>
            <person name="Carmillo P."/>
            <person name="Ehrenfels C."/>
            <person name="Walus L."/>
            <person name="Robinson S."/>
            <person name="Jaworski G."/>
            <person name="Wei H."/>
            <person name="Tizard R."/>
            <person name="Whitty A."/>
            <person name="Pepinsky R.B."/>
            <person name="Cate R.L."/>
        </authorList>
    </citation>
    <scope>NUCLEOTIDE SEQUENCE [MRNA] (ISOFORM 1)</scope>
    <source>
        <tissue>Liver</tissue>
    </source>
</reference>
<reference key="4">
    <citation type="submission" date="2005-02" db="EMBL/GenBank/DDBJ databases">
        <authorList>
            <person name="Yoong L.F."/>
            <person name="Too H.P."/>
        </authorList>
    </citation>
    <scope>NUCLEOTIDE SEQUENCE [MRNA] (ISOFORMS 2 AND 3)</scope>
    <scope>VARIANT GLN-462</scope>
</reference>
<reference key="5">
    <citation type="journal article" date="2006" name="Nature">
        <title>DNA sequence and analysis of human chromosome 8.</title>
        <authorList>
            <person name="Nusbaum C."/>
            <person name="Mikkelsen T.S."/>
            <person name="Zody M.C."/>
            <person name="Asakawa S."/>
            <person name="Taudien S."/>
            <person name="Garber M."/>
            <person name="Kodira C.D."/>
            <person name="Schueler M.G."/>
            <person name="Shimizu A."/>
            <person name="Whittaker C.A."/>
            <person name="Chang J.L."/>
            <person name="Cuomo C.A."/>
            <person name="Dewar K."/>
            <person name="FitzGerald M.G."/>
            <person name="Yang X."/>
            <person name="Allen N.R."/>
            <person name="Anderson S."/>
            <person name="Asakawa T."/>
            <person name="Blechschmidt K."/>
            <person name="Bloom T."/>
            <person name="Borowsky M.L."/>
            <person name="Butler J."/>
            <person name="Cook A."/>
            <person name="Corum B."/>
            <person name="DeArellano K."/>
            <person name="DeCaprio D."/>
            <person name="Dooley K.T."/>
            <person name="Dorris L. III"/>
            <person name="Engels R."/>
            <person name="Gloeckner G."/>
            <person name="Hafez N."/>
            <person name="Hagopian D.S."/>
            <person name="Hall J.L."/>
            <person name="Ishikawa S.K."/>
            <person name="Jaffe D.B."/>
            <person name="Kamat A."/>
            <person name="Kudoh J."/>
            <person name="Lehmann R."/>
            <person name="Lokitsang T."/>
            <person name="Macdonald P."/>
            <person name="Major J.E."/>
            <person name="Matthews C.D."/>
            <person name="Mauceli E."/>
            <person name="Menzel U."/>
            <person name="Mihalev A.H."/>
            <person name="Minoshima S."/>
            <person name="Murayama Y."/>
            <person name="Naylor J.W."/>
            <person name="Nicol R."/>
            <person name="Nguyen C."/>
            <person name="O'Leary S.B."/>
            <person name="O'Neill K."/>
            <person name="Parker S.C.J."/>
            <person name="Polley A."/>
            <person name="Raymond C.K."/>
            <person name="Reichwald K."/>
            <person name="Rodriguez J."/>
            <person name="Sasaki T."/>
            <person name="Schilhabel M."/>
            <person name="Siddiqui R."/>
            <person name="Smith C.L."/>
            <person name="Sneddon T.P."/>
            <person name="Talamas J.A."/>
            <person name="Tenzin P."/>
            <person name="Topham K."/>
            <person name="Venkataraman V."/>
            <person name="Wen G."/>
            <person name="Yamazaki S."/>
            <person name="Young S.K."/>
            <person name="Zeng Q."/>
            <person name="Zimmer A.R."/>
            <person name="Rosenthal A."/>
            <person name="Birren B.W."/>
            <person name="Platzer M."/>
            <person name="Shimizu N."/>
            <person name="Lander E.S."/>
        </authorList>
    </citation>
    <scope>NUCLEOTIDE SEQUENCE [LARGE SCALE GENOMIC DNA]</scope>
</reference>
<reference key="6">
    <citation type="journal article" date="2004" name="Genome Res.">
        <title>The status, quality, and expansion of the NIH full-length cDNA project: the Mammalian Gene Collection (MGC).</title>
        <authorList>
            <consortium name="The MGC Project Team"/>
        </authorList>
    </citation>
    <scope>NUCLEOTIDE SEQUENCE [LARGE SCALE MRNA]</scope>
    <source>
        <tissue>Brain</tissue>
    </source>
</reference>
<reference key="7">
    <citation type="journal article" date="2000" name="J. Biol. Chem.">
        <title>Binding of GDNF and neurturin to human GDNF family receptor alpha 1 and 2. Influence of cRET and cooperative interactions.</title>
        <authorList>
            <person name="Cik M."/>
            <person name="Masure S."/>
            <person name="Lesage A.S."/>
            <person name="Van Der Linden I."/>
            <person name="Van Gompel P."/>
            <person name="Pangalos M.N."/>
            <person name="Gordon R.D."/>
            <person name="Leysen J.E."/>
        </authorList>
    </citation>
    <scope>FUNCTION</scope>
</reference>
<reference key="8">
    <citation type="journal article" date="2013" name="Cell Rep.">
        <title>SorLA controls neurotrophic activity by sorting of GDNF and its receptors GFRalpha1 and RET.</title>
        <authorList>
            <person name="Glerup S."/>
            <person name="Lume M."/>
            <person name="Olsen D."/>
            <person name="Nyengaard J.R."/>
            <person name="Vaegter C.B."/>
            <person name="Gustafsen C."/>
            <person name="Christensen E.I."/>
            <person name="Kjolby M."/>
            <person name="Hay-Schmidt A."/>
            <person name="Bender D."/>
            <person name="Madsen P."/>
            <person name="Saarma M."/>
            <person name="Nykjaer A."/>
            <person name="Petersen C.M."/>
        </authorList>
    </citation>
    <scope>INTERACTION WITH SORL1</scope>
</reference>
<reference evidence="14 15" key="9">
    <citation type="journal article" date="2018" name="J. Biol. Chem.">
        <title>Structure and biophysical characterization of the human full-length neurturin-GFRa2 complex: A role for heparan sulfate in signaling.</title>
        <authorList>
            <person name="Sandmark J."/>
            <person name="Dahl G."/>
            <person name="Oester L."/>
            <person name="Xu B."/>
            <person name="Johansson P."/>
            <person name="Akerud T."/>
            <person name="Aagaard A."/>
            <person name="Davidsson P."/>
            <person name="Bigalke J.M."/>
            <person name="Winzell M.S."/>
            <person name="Rainey G.J."/>
            <person name="Roth R.G."/>
        </authorList>
    </citation>
    <scope>X-RAY CRYSTALLOGRAPHY (1.60 ANGSTROMS) OF 1-458 IN COMPLEX WITH NRTN</scope>
    <scope>FUNCTION</scope>
    <scope>DISULFIDE BONDS</scope>
</reference>
<reference evidence="16 17" key="10">
    <citation type="journal article" date="2019" name="Elife">
        <title>Cryo-EM analyses reveal the common mechanism and diversification in the activation of RET by different ligands.</title>
        <authorList>
            <person name="Li J."/>
            <person name="Shang G."/>
            <person name="Chen Y.J."/>
            <person name="Brautigam C.A."/>
            <person name="Liou J."/>
            <person name="Zhang X."/>
            <person name="Bai X.C."/>
        </authorList>
    </citation>
    <scope>STRUCTURE BY ELECTRON MICROSCOPY (3.65 ANGSTROMS) OF 24-362 IN COMPLEX WITH RET AND NRTN</scope>
    <scope>FUNCTION</scope>
    <scope>SUBUNIT</scope>
    <scope>DISULFIDE BONDS</scope>
</reference>
<sequence>MILANVFCLFFFLDETLRSLASPSSLQGPELHGWRPPVDCVRANELCAAESNCSSRYRTLRQCLAGRDRNTMLANKECQAALEVLQESPLYDCRCKRGMKKELQCLQIYWSIHLGLTEGEEFYEASPYEPVTSRLSDIFRLASIFSGTGADPVVSAKSNHCLDAAKACNLNDNCKKLRSSYISICNREISPTERCNRRKCHKALRQFFDRVPSEYTYRMLFCSCQDQACAERRRQTILPSCSYEDKEKPNCLDLRGVCRTDHLCRSRLADFHANCRASYQTVTSCPADNYQACLGSYAGMIGFDMTPNYVDSSPTGIVVSPWCSCRGSGNMEEECEKFLRDFTENPCLRNAIQAFGNGTDVNVSPKGPSFQATQAPRVEKTPSLPDDLSDSTSLGTSVITTCTSVQEQGLKANNSKELSMCFTELTTNIIPGSNKVIKPNSGPSRARPSAALTVLSVLMLKLAL</sequence>
<accession>O00451</accession>
<accession>E9PD47</accession>
<accession>O15316</accession>
<accession>O15328</accession>
<accession>Q58J92</accession>
<accession>Q6GTR9</accession>
<accession>Q7Z5C2</accession>
<gene>
    <name type="primary">GFRA2</name>
    <name type="synonym">GDNFRB</name>
    <name type="synonym">RETL2</name>
    <name evidence="11" type="synonym">TRNR2</name>
</gene>
<evidence type="ECO:0000250" key="1">
    <source>
        <dbReference type="UniProtKB" id="O08842"/>
    </source>
</evidence>
<evidence type="ECO:0000255" key="2"/>
<evidence type="ECO:0000256" key="3">
    <source>
        <dbReference type="SAM" id="MobiDB-lite"/>
    </source>
</evidence>
<evidence type="ECO:0000269" key="4">
    <source>
    </source>
</evidence>
<evidence type="ECO:0000269" key="5">
    <source>
    </source>
</evidence>
<evidence type="ECO:0000269" key="6">
    <source>
    </source>
</evidence>
<evidence type="ECO:0000269" key="7">
    <source>
    </source>
</evidence>
<evidence type="ECO:0000269" key="8">
    <source>
    </source>
</evidence>
<evidence type="ECO:0000269" key="9">
    <source>
    </source>
</evidence>
<evidence type="ECO:0000269" key="10">
    <source ref="4"/>
</evidence>
<evidence type="ECO:0000303" key="11">
    <source>
    </source>
</evidence>
<evidence type="ECO:0000303" key="12">
    <source ref="4"/>
</evidence>
<evidence type="ECO:0000305" key="13"/>
<evidence type="ECO:0007744" key="14">
    <source>
        <dbReference type="PDB" id="5MR4"/>
    </source>
</evidence>
<evidence type="ECO:0007744" key="15">
    <source>
        <dbReference type="PDB" id="5MR5"/>
    </source>
</evidence>
<evidence type="ECO:0007744" key="16">
    <source>
        <dbReference type="PDB" id="6Q2O"/>
    </source>
</evidence>
<evidence type="ECO:0007744" key="17">
    <source>
        <dbReference type="PDB" id="6Q2R"/>
    </source>
</evidence>
<evidence type="ECO:0007829" key="18">
    <source>
        <dbReference type="PDB" id="5MR4"/>
    </source>
</evidence>
<evidence type="ECO:0007829" key="19">
    <source>
        <dbReference type="PDB" id="5MR5"/>
    </source>
</evidence>
<protein>
    <recommendedName>
        <fullName>GDNF family receptor alpha-2</fullName>
        <shortName>GDNF receptor alpha-2</shortName>
        <shortName>GDNFR-alpha-2</shortName>
        <shortName>GFR-alpha-2</shortName>
    </recommendedName>
    <alternativeName>
        <fullName>GDNF receptor beta</fullName>
        <shortName>GDNFR-beta</shortName>
    </alternativeName>
    <alternativeName>
        <fullName>Neurturin receptor alpha</fullName>
        <shortName>NRTNR-alpha</shortName>
        <shortName>NTNR-alpha</shortName>
    </alternativeName>
    <alternativeName>
        <fullName>RET ligand 2</fullName>
    </alternativeName>
    <alternativeName>
        <fullName>TGF-beta-related neurotrophic factor receptor 2</fullName>
    </alternativeName>
</protein>
<proteinExistence type="evidence at protein level"/>
<organism>
    <name type="scientific">Homo sapiens</name>
    <name type="common">Human</name>
    <dbReference type="NCBI Taxonomy" id="9606"/>
    <lineage>
        <taxon>Eukaryota</taxon>
        <taxon>Metazoa</taxon>
        <taxon>Chordata</taxon>
        <taxon>Craniata</taxon>
        <taxon>Vertebrata</taxon>
        <taxon>Euteleostomi</taxon>
        <taxon>Mammalia</taxon>
        <taxon>Eutheria</taxon>
        <taxon>Euarchontoglires</taxon>
        <taxon>Primates</taxon>
        <taxon>Haplorrhini</taxon>
        <taxon>Catarrhini</taxon>
        <taxon>Hominidae</taxon>
        <taxon>Homo</taxon>
    </lineage>
</organism>